<evidence type="ECO:0000255" key="1">
    <source>
        <dbReference type="HAMAP-Rule" id="MF_00530"/>
    </source>
</evidence>
<protein>
    <recommendedName>
        <fullName evidence="1">ATP synthase epsilon chain</fullName>
    </recommendedName>
    <alternativeName>
        <fullName evidence="1">ATP synthase F1 sector epsilon subunit</fullName>
    </alternativeName>
    <alternativeName>
        <fullName evidence="1">F-ATPase epsilon subunit</fullName>
    </alternativeName>
</protein>
<organism>
    <name type="scientific">Bacillus mycoides (strain KBAB4)</name>
    <name type="common">Bacillus weihenstephanensis</name>
    <dbReference type="NCBI Taxonomy" id="315730"/>
    <lineage>
        <taxon>Bacteria</taxon>
        <taxon>Bacillati</taxon>
        <taxon>Bacillota</taxon>
        <taxon>Bacilli</taxon>
        <taxon>Bacillales</taxon>
        <taxon>Bacillaceae</taxon>
        <taxon>Bacillus</taxon>
        <taxon>Bacillus cereus group</taxon>
    </lineage>
</organism>
<keyword id="KW-0066">ATP synthesis</keyword>
<keyword id="KW-1003">Cell membrane</keyword>
<keyword id="KW-0139">CF(1)</keyword>
<keyword id="KW-0375">Hydrogen ion transport</keyword>
<keyword id="KW-0406">Ion transport</keyword>
<keyword id="KW-0472">Membrane</keyword>
<keyword id="KW-0813">Transport</keyword>
<accession>A9VSA2</accession>
<dbReference type="EMBL" id="CP000903">
    <property type="protein sequence ID" value="ABY46248.1"/>
    <property type="molecule type" value="Genomic_DNA"/>
</dbReference>
<dbReference type="RefSeq" id="WP_002016279.1">
    <property type="nucleotide sequence ID" value="NC_010184.1"/>
</dbReference>
<dbReference type="SMR" id="A9VSA2"/>
<dbReference type="GeneID" id="66265140"/>
<dbReference type="KEGG" id="bwe:BcerKBAB4_5102"/>
<dbReference type="eggNOG" id="COG0355">
    <property type="taxonomic scope" value="Bacteria"/>
</dbReference>
<dbReference type="HOGENOM" id="CLU_084338_1_3_9"/>
<dbReference type="Proteomes" id="UP000002154">
    <property type="component" value="Chromosome"/>
</dbReference>
<dbReference type="GO" id="GO:0005886">
    <property type="term" value="C:plasma membrane"/>
    <property type="evidence" value="ECO:0007669"/>
    <property type="project" value="UniProtKB-SubCell"/>
</dbReference>
<dbReference type="GO" id="GO:0045259">
    <property type="term" value="C:proton-transporting ATP synthase complex"/>
    <property type="evidence" value="ECO:0007669"/>
    <property type="project" value="UniProtKB-KW"/>
</dbReference>
<dbReference type="GO" id="GO:0005524">
    <property type="term" value="F:ATP binding"/>
    <property type="evidence" value="ECO:0007669"/>
    <property type="project" value="UniProtKB-UniRule"/>
</dbReference>
<dbReference type="GO" id="GO:0046933">
    <property type="term" value="F:proton-transporting ATP synthase activity, rotational mechanism"/>
    <property type="evidence" value="ECO:0007669"/>
    <property type="project" value="UniProtKB-UniRule"/>
</dbReference>
<dbReference type="CDD" id="cd12152">
    <property type="entry name" value="F1-ATPase_delta"/>
    <property type="match status" value="1"/>
</dbReference>
<dbReference type="FunFam" id="1.20.5.440:FF:000001">
    <property type="entry name" value="ATP synthase epsilon chain"/>
    <property type="match status" value="1"/>
</dbReference>
<dbReference type="FunFam" id="2.60.15.10:FF:000001">
    <property type="entry name" value="ATP synthase epsilon chain"/>
    <property type="match status" value="1"/>
</dbReference>
<dbReference type="Gene3D" id="1.20.5.440">
    <property type="entry name" value="ATP synthase delta/epsilon subunit, C-terminal domain"/>
    <property type="match status" value="1"/>
</dbReference>
<dbReference type="Gene3D" id="2.60.15.10">
    <property type="entry name" value="F0F1 ATP synthase delta/epsilon subunit, N-terminal"/>
    <property type="match status" value="1"/>
</dbReference>
<dbReference type="HAMAP" id="MF_00530">
    <property type="entry name" value="ATP_synth_epsil_bac"/>
    <property type="match status" value="1"/>
</dbReference>
<dbReference type="InterPro" id="IPR036794">
    <property type="entry name" value="ATP_F1_dsu/esu_C_sf"/>
</dbReference>
<dbReference type="InterPro" id="IPR001469">
    <property type="entry name" value="ATP_synth_F1_dsu/esu"/>
</dbReference>
<dbReference type="InterPro" id="IPR020546">
    <property type="entry name" value="ATP_synth_F1_dsu/esu_N"/>
</dbReference>
<dbReference type="InterPro" id="IPR020547">
    <property type="entry name" value="ATP_synth_F1_esu_C"/>
</dbReference>
<dbReference type="InterPro" id="IPR036771">
    <property type="entry name" value="ATPsynth_dsu/esu_N"/>
</dbReference>
<dbReference type="NCBIfam" id="TIGR01216">
    <property type="entry name" value="ATP_synt_epsi"/>
    <property type="match status" value="1"/>
</dbReference>
<dbReference type="NCBIfam" id="NF001846">
    <property type="entry name" value="PRK00571.1-3"/>
    <property type="match status" value="1"/>
</dbReference>
<dbReference type="NCBIfam" id="NF009980">
    <property type="entry name" value="PRK13446.1"/>
    <property type="match status" value="1"/>
</dbReference>
<dbReference type="PANTHER" id="PTHR13822">
    <property type="entry name" value="ATP SYNTHASE DELTA/EPSILON CHAIN"/>
    <property type="match status" value="1"/>
</dbReference>
<dbReference type="PANTHER" id="PTHR13822:SF10">
    <property type="entry name" value="ATP SYNTHASE EPSILON CHAIN, CHLOROPLASTIC"/>
    <property type="match status" value="1"/>
</dbReference>
<dbReference type="Pfam" id="PF00401">
    <property type="entry name" value="ATP-synt_DE"/>
    <property type="match status" value="1"/>
</dbReference>
<dbReference type="Pfam" id="PF02823">
    <property type="entry name" value="ATP-synt_DE_N"/>
    <property type="match status" value="1"/>
</dbReference>
<dbReference type="SUPFAM" id="SSF46604">
    <property type="entry name" value="Epsilon subunit of F1F0-ATP synthase C-terminal domain"/>
    <property type="match status" value="1"/>
</dbReference>
<dbReference type="SUPFAM" id="SSF51344">
    <property type="entry name" value="Epsilon subunit of F1F0-ATP synthase N-terminal domain"/>
    <property type="match status" value="1"/>
</dbReference>
<name>ATPE_BACMK</name>
<comment type="function">
    <text evidence="1">Produces ATP from ADP in the presence of a proton gradient across the membrane.</text>
</comment>
<comment type="subunit">
    <text evidence="1">F-type ATPases have 2 components, CF(1) - the catalytic core - and CF(0) - the membrane proton channel. CF(1) has five subunits: alpha(3), beta(3), gamma(1), delta(1), epsilon(1). CF(0) has three main subunits: a, b and c.</text>
</comment>
<comment type="subcellular location">
    <subcellularLocation>
        <location evidence="1">Cell membrane</location>
        <topology evidence="1">Peripheral membrane protein</topology>
    </subcellularLocation>
</comment>
<comment type="similarity">
    <text evidence="1">Belongs to the ATPase epsilon chain family.</text>
</comment>
<proteinExistence type="inferred from homology"/>
<feature type="chain" id="PRO_1000127827" description="ATP synthase epsilon chain">
    <location>
        <begin position="1"/>
        <end position="133"/>
    </location>
</feature>
<gene>
    <name evidence="1" type="primary">atpC</name>
    <name type="ordered locus">BcerKBAB4_5102</name>
</gene>
<sequence length="133" mass="14706">MKTFPVSIVTPDGPVYEKEVEMVSVKAESGEMGILPGHIPTVAPLKISAVRLKNGGHTDYVAVSGGFIEVRPDKVTVLSSSAEEANHIDIHRANESKRRAEQRMQDKQAHVDFRRAEMALQRAVNRLNVSDMK</sequence>
<reference key="1">
    <citation type="journal article" date="2008" name="Chem. Biol. Interact.">
        <title>Extending the Bacillus cereus group genomics to putative food-borne pathogens of different toxicity.</title>
        <authorList>
            <person name="Lapidus A."/>
            <person name="Goltsman E."/>
            <person name="Auger S."/>
            <person name="Galleron N."/>
            <person name="Segurens B."/>
            <person name="Dossat C."/>
            <person name="Land M.L."/>
            <person name="Broussolle V."/>
            <person name="Brillard J."/>
            <person name="Guinebretiere M.-H."/>
            <person name="Sanchis V."/>
            <person name="Nguen-the C."/>
            <person name="Lereclus D."/>
            <person name="Richardson P."/>
            <person name="Wincker P."/>
            <person name="Weissenbach J."/>
            <person name="Ehrlich S.D."/>
            <person name="Sorokin A."/>
        </authorList>
    </citation>
    <scope>NUCLEOTIDE SEQUENCE [LARGE SCALE GENOMIC DNA]</scope>
    <source>
        <strain>KBAB4</strain>
    </source>
</reference>